<feature type="chain" id="PRO_0000072335" description="Ceramide-binding protein SVF1">
    <location>
        <begin position="1"/>
        <end position="398"/>
    </location>
</feature>
<feature type="region of interest" description="Peripherally associates with membranes" evidence="1">
    <location>
        <begin position="1"/>
        <end position="18"/>
    </location>
</feature>
<name>SVF1_YARLI</name>
<sequence length="398" mass="44000">MLKWVQGGVSALTGSAEPEYGAEAFESVSKSVDGKNPYGSLTLPELNWLKPAGSNVETQTFYFFSKDGKQFGHVQIIHSNPLGIQNTAQFTFRLSNADKPEENVWSSTNVEEFEPVGPNFTAKGPMDGVNIKLVPSVDDDGKTTEAFHVKIHVSDEVKLDLTFTRSVEGFKIGPTGQSKYGEDLNNPWGAMRHSFWPRASVSGTIEVANKDKMELDNDFGFFVHATQGMKPHHAASKWNFITYQSPKYSAVVMDYTTPPSYGSSRVTIGGVASAEKLLFTSANATVEHVETKEDEEVGWQVPTLIKFECEGPKVDVADEDVDKPENRGKAVLQGNLTHLERMDVMAEIPAFLKSLASTVSGTKPYIYQFRNEMELELEIDGEKIQDKGQIFCEATFIS</sequence>
<accession>Q6CBN5</accession>
<reference key="1">
    <citation type="journal article" date="2004" name="Nature">
        <title>Genome evolution in yeasts.</title>
        <authorList>
            <person name="Dujon B."/>
            <person name="Sherman D."/>
            <person name="Fischer G."/>
            <person name="Durrens P."/>
            <person name="Casaregola S."/>
            <person name="Lafontaine I."/>
            <person name="de Montigny J."/>
            <person name="Marck C."/>
            <person name="Neuveglise C."/>
            <person name="Talla E."/>
            <person name="Goffard N."/>
            <person name="Frangeul L."/>
            <person name="Aigle M."/>
            <person name="Anthouard V."/>
            <person name="Babour A."/>
            <person name="Barbe V."/>
            <person name="Barnay S."/>
            <person name="Blanchin S."/>
            <person name="Beckerich J.-M."/>
            <person name="Beyne E."/>
            <person name="Bleykasten C."/>
            <person name="Boisrame A."/>
            <person name="Boyer J."/>
            <person name="Cattolico L."/>
            <person name="Confanioleri F."/>
            <person name="de Daruvar A."/>
            <person name="Despons L."/>
            <person name="Fabre E."/>
            <person name="Fairhead C."/>
            <person name="Ferry-Dumazet H."/>
            <person name="Groppi A."/>
            <person name="Hantraye F."/>
            <person name="Hennequin C."/>
            <person name="Jauniaux N."/>
            <person name="Joyet P."/>
            <person name="Kachouri R."/>
            <person name="Kerrest A."/>
            <person name="Koszul R."/>
            <person name="Lemaire M."/>
            <person name="Lesur I."/>
            <person name="Ma L."/>
            <person name="Muller H."/>
            <person name="Nicaud J.-M."/>
            <person name="Nikolski M."/>
            <person name="Oztas S."/>
            <person name="Ozier-Kalogeropoulos O."/>
            <person name="Pellenz S."/>
            <person name="Potier S."/>
            <person name="Richard G.-F."/>
            <person name="Straub M.-L."/>
            <person name="Suleau A."/>
            <person name="Swennen D."/>
            <person name="Tekaia F."/>
            <person name="Wesolowski-Louvel M."/>
            <person name="Westhof E."/>
            <person name="Wirth B."/>
            <person name="Zeniou-Meyer M."/>
            <person name="Zivanovic Y."/>
            <person name="Bolotin-Fukuhara M."/>
            <person name="Thierry A."/>
            <person name="Bouchier C."/>
            <person name="Caudron B."/>
            <person name="Scarpelli C."/>
            <person name="Gaillardin C."/>
            <person name="Weissenbach J."/>
            <person name="Wincker P."/>
            <person name="Souciet J.-L."/>
        </authorList>
    </citation>
    <scope>NUCLEOTIDE SEQUENCE [LARGE SCALE GENOMIC DNA]</scope>
    <source>
        <strain>CLIB 122 / E 150</strain>
    </source>
</reference>
<dbReference type="EMBL" id="CR382129">
    <property type="protein sequence ID" value="CAG82247.1"/>
    <property type="molecule type" value="Genomic_DNA"/>
</dbReference>
<dbReference type="RefSeq" id="XP_501927.1">
    <property type="nucleotide sequence ID" value="XM_501927.1"/>
</dbReference>
<dbReference type="FunCoup" id="Q6CBN5">
    <property type="interactions" value="111"/>
</dbReference>
<dbReference type="STRING" id="284591.Q6CBN5"/>
<dbReference type="EnsemblFungi" id="CAG82247">
    <property type="protein sequence ID" value="CAG82247"/>
    <property type="gene ID" value="YALI0_C16973g"/>
</dbReference>
<dbReference type="KEGG" id="yli:2910079"/>
<dbReference type="VEuPathDB" id="FungiDB:YALI0_C16973g"/>
<dbReference type="HOGENOM" id="CLU_030205_2_0_1"/>
<dbReference type="InParanoid" id="Q6CBN5"/>
<dbReference type="OMA" id="AFWPRCV"/>
<dbReference type="OrthoDB" id="93785at4891"/>
<dbReference type="Proteomes" id="UP000001300">
    <property type="component" value="Chromosome C"/>
</dbReference>
<dbReference type="GO" id="GO:0033106">
    <property type="term" value="C:cis-Golgi network membrane"/>
    <property type="evidence" value="ECO:0000250"/>
    <property type="project" value="UniProtKB"/>
</dbReference>
<dbReference type="GO" id="GO:0005737">
    <property type="term" value="C:cytoplasm"/>
    <property type="evidence" value="ECO:0000250"/>
    <property type="project" value="UniProtKB"/>
</dbReference>
<dbReference type="GO" id="GO:0005789">
    <property type="term" value="C:endoplasmic reticulum membrane"/>
    <property type="evidence" value="ECO:0007669"/>
    <property type="project" value="UniProtKB-SubCell"/>
</dbReference>
<dbReference type="GO" id="GO:0005634">
    <property type="term" value="C:nucleus"/>
    <property type="evidence" value="ECO:0007669"/>
    <property type="project" value="UniProtKB-SubCell"/>
</dbReference>
<dbReference type="GO" id="GO:0097001">
    <property type="term" value="F:ceramide binding"/>
    <property type="evidence" value="ECO:0000250"/>
    <property type="project" value="UniProtKB"/>
</dbReference>
<dbReference type="GO" id="GO:0035621">
    <property type="term" value="P:ER to Golgi ceramide transport"/>
    <property type="evidence" value="ECO:0000250"/>
    <property type="project" value="UniProtKB"/>
</dbReference>
<dbReference type="GO" id="GO:0006979">
    <property type="term" value="P:response to oxidative stress"/>
    <property type="evidence" value="ECO:0007669"/>
    <property type="project" value="InterPro"/>
</dbReference>
<dbReference type="InterPro" id="IPR051385">
    <property type="entry name" value="Ceramide-binding_SVF1"/>
</dbReference>
<dbReference type="InterPro" id="IPR033394">
    <property type="entry name" value="Svf1-like_C"/>
</dbReference>
<dbReference type="InterPro" id="IPR013931">
    <property type="entry name" value="Svf1-like_N"/>
</dbReference>
<dbReference type="PANTHER" id="PTHR47107:SF1">
    <property type="entry name" value="CERAMIDE-BINDING PROTEIN SVF1-RELATED"/>
    <property type="match status" value="1"/>
</dbReference>
<dbReference type="PANTHER" id="PTHR47107">
    <property type="entry name" value="SVF1-LIKE PROTEIN YDR222W-RELATED"/>
    <property type="match status" value="1"/>
</dbReference>
<dbReference type="Pfam" id="PF08622">
    <property type="entry name" value="Svf1"/>
    <property type="match status" value="1"/>
</dbReference>
<dbReference type="Pfam" id="PF17187">
    <property type="entry name" value="Svf1_C"/>
    <property type="match status" value="1"/>
</dbReference>
<dbReference type="SUPFAM" id="SSF159245">
    <property type="entry name" value="AttH-like"/>
    <property type="match status" value="1"/>
</dbReference>
<organism>
    <name type="scientific">Yarrowia lipolytica (strain CLIB 122 / E 150)</name>
    <name type="common">Yeast</name>
    <name type="synonym">Candida lipolytica</name>
    <dbReference type="NCBI Taxonomy" id="284591"/>
    <lineage>
        <taxon>Eukaryota</taxon>
        <taxon>Fungi</taxon>
        <taxon>Dikarya</taxon>
        <taxon>Ascomycota</taxon>
        <taxon>Saccharomycotina</taxon>
        <taxon>Dipodascomycetes</taxon>
        <taxon>Dipodascales</taxon>
        <taxon>Dipodascales incertae sedis</taxon>
        <taxon>Yarrowia</taxon>
    </lineage>
</organism>
<gene>
    <name type="primary">SVF1</name>
    <name type="ordered locus">YALI0C16973g</name>
</gene>
<evidence type="ECO:0000250" key="1">
    <source>
        <dbReference type="UniProtKB" id="Q05515"/>
    </source>
</evidence>
<evidence type="ECO:0000305" key="2"/>
<proteinExistence type="inferred from homology"/>
<keyword id="KW-0963">Cytoplasm</keyword>
<keyword id="KW-0256">Endoplasmic reticulum</keyword>
<keyword id="KW-0333">Golgi apparatus</keyword>
<keyword id="KW-0445">Lipid transport</keyword>
<keyword id="KW-0472">Membrane</keyword>
<keyword id="KW-0539">Nucleus</keyword>
<keyword id="KW-1185">Reference proteome</keyword>
<keyword id="KW-0813">Transport</keyword>
<comment type="function">
    <text evidence="1">Ceramide-binding protein that may transfer ceramides from the endoplasmic reticulum membrane to the cis-Golgi network membrane, and is thereby required for the biosynthesis of complex sphingolipids.</text>
</comment>
<comment type="subcellular location">
    <subcellularLocation>
        <location evidence="1">Golgi apparatus</location>
        <location evidence="1">cis-Golgi network membrane</location>
        <topology evidence="1">Peripheral membrane protein</topology>
    </subcellularLocation>
    <subcellularLocation>
        <location evidence="1">Endoplasmic reticulum membrane</location>
        <topology evidence="1">Peripheral membrane protein</topology>
    </subcellularLocation>
    <subcellularLocation>
        <location evidence="1">Cytoplasm</location>
    </subcellularLocation>
    <subcellularLocation>
        <location evidence="1">Nucleus</location>
    </subcellularLocation>
    <text evidence="1">Localizes to the interface between the cis-Golgi network and endoplasmic reticulum exit sites.</text>
</comment>
<comment type="similarity">
    <text evidence="2">Belongs to the SVF1 family.</text>
</comment>
<protein>
    <recommendedName>
        <fullName evidence="2">Ceramide-binding protein SVF1</fullName>
    </recommendedName>
    <alternativeName>
        <fullName>Survival factor 1</fullName>
    </alternativeName>
</protein>